<dbReference type="EMBL" id="AE014296">
    <property type="protein sequence ID" value="AAF49832.1"/>
    <property type="molecule type" value="Genomic_DNA"/>
</dbReference>
<dbReference type="EMBL" id="AY113560">
    <property type="protein sequence ID" value="AAM29565.1"/>
    <property type="molecule type" value="mRNA"/>
</dbReference>
<dbReference type="RefSeq" id="NP_001287059.1">
    <property type="nucleotide sequence ID" value="NM_001300130.1"/>
</dbReference>
<dbReference type="RefSeq" id="NP_652430.1">
    <property type="nucleotide sequence ID" value="NM_144173.3"/>
</dbReference>
<dbReference type="SMR" id="Q9VU58"/>
<dbReference type="BioGRID" id="72623">
    <property type="interactions" value="47"/>
</dbReference>
<dbReference type="DIP" id="DIP-19165N"/>
<dbReference type="FunCoup" id="Q9VU58">
    <property type="interactions" value="20"/>
</dbReference>
<dbReference type="IntAct" id="Q9VU58">
    <property type="interactions" value="96"/>
</dbReference>
<dbReference type="STRING" id="7227.FBpp0312403"/>
<dbReference type="GlyGen" id="Q9VU58">
    <property type="glycosylation" value="1 site, 1 O-linked glycan (1 site)"/>
</dbReference>
<dbReference type="PaxDb" id="7227-FBpp0075575"/>
<dbReference type="DNASU" id="50286"/>
<dbReference type="EnsemblMetazoa" id="FBtr0075839">
    <property type="protein sequence ID" value="FBpp0075575"/>
    <property type="gene ID" value="FBgn0287423"/>
</dbReference>
<dbReference type="EnsemblMetazoa" id="FBtr0346389">
    <property type="protein sequence ID" value="FBpp0312079"/>
    <property type="gene ID" value="FBgn0287423"/>
</dbReference>
<dbReference type="GeneID" id="50286"/>
<dbReference type="KEGG" id="dme:Dmel_CG11051"/>
<dbReference type="AGR" id="FB:FBgn0287423"/>
<dbReference type="CTD" id="50286"/>
<dbReference type="FlyBase" id="FBgn0287423">
    <property type="gene designation" value="Nplp2"/>
</dbReference>
<dbReference type="VEuPathDB" id="VectorBase:FBgn0287423"/>
<dbReference type="HOGENOM" id="CLU_167078_0_0_1"/>
<dbReference type="InParanoid" id="Q9VU58"/>
<dbReference type="OMA" id="APAASTX"/>
<dbReference type="OrthoDB" id="10569403at2759"/>
<dbReference type="PhylomeDB" id="Q9VU58"/>
<dbReference type="BioGRID-ORCS" id="50286">
    <property type="hits" value="0 hits in 1 CRISPR screen"/>
</dbReference>
<dbReference type="ChiTaRS" id="Nplp2">
    <property type="organism name" value="fly"/>
</dbReference>
<dbReference type="GenomeRNAi" id="50286"/>
<dbReference type="PRO" id="PR:Q9VU58"/>
<dbReference type="Proteomes" id="UP000000803">
    <property type="component" value="Chromosome 3L"/>
</dbReference>
<dbReference type="ExpressionAtlas" id="Q9VU58">
    <property type="expression patterns" value="baseline and differential"/>
</dbReference>
<dbReference type="GO" id="GO:0005576">
    <property type="term" value="C:extracellular region"/>
    <property type="evidence" value="ECO:0000303"/>
    <property type="project" value="UniProtKB"/>
</dbReference>
<dbReference type="GO" id="GO:0005615">
    <property type="term" value="C:extracellular space"/>
    <property type="evidence" value="ECO:0000314"/>
    <property type="project" value="FlyBase"/>
</dbReference>
<dbReference type="GO" id="GO:0005184">
    <property type="term" value="F:neuropeptide hormone activity"/>
    <property type="evidence" value="ECO:0000303"/>
    <property type="project" value="UniProtKB"/>
</dbReference>
<dbReference type="GO" id="GO:0006959">
    <property type="term" value="P:humoral immune response"/>
    <property type="evidence" value="ECO:0000270"/>
    <property type="project" value="FlyBase"/>
</dbReference>
<dbReference type="GO" id="GO:0007218">
    <property type="term" value="P:neuropeptide signaling pathway"/>
    <property type="evidence" value="ECO:0000303"/>
    <property type="project" value="UniProtKB"/>
</dbReference>
<accession>Q9VU58</accession>
<proteinExistence type="evidence at protein level"/>
<organism>
    <name type="scientific">Drosophila melanogaster</name>
    <name type="common">Fruit fly</name>
    <dbReference type="NCBI Taxonomy" id="7227"/>
    <lineage>
        <taxon>Eukaryota</taxon>
        <taxon>Metazoa</taxon>
        <taxon>Ecdysozoa</taxon>
        <taxon>Arthropoda</taxon>
        <taxon>Hexapoda</taxon>
        <taxon>Insecta</taxon>
        <taxon>Pterygota</taxon>
        <taxon>Neoptera</taxon>
        <taxon>Endopterygota</taxon>
        <taxon>Diptera</taxon>
        <taxon>Brachycera</taxon>
        <taxon>Muscomorpha</taxon>
        <taxon>Ephydroidea</taxon>
        <taxon>Drosophilidae</taxon>
        <taxon>Drosophila</taxon>
        <taxon>Sophophora</taxon>
    </lineage>
</organism>
<name>NPLP2_DROME</name>
<evidence type="ECO:0000255" key="1"/>
<evidence type="ECO:0000269" key="2">
    <source>
    </source>
</evidence>
<evidence type="ECO:0000303" key="3">
    <source>
    </source>
</evidence>
<comment type="subcellular location">
    <subcellularLocation>
        <location evidence="2">Secreted</location>
    </subcellularLocation>
</comment>
<comment type="tissue specificity">
    <text evidence="2">Hemolymph (at protein level).</text>
</comment>
<comment type="induction">
    <text evidence="2">By bacterial infection (at protein level).</text>
</comment>
<feature type="signal peptide" evidence="1">
    <location>
        <begin position="1"/>
        <end position="19"/>
    </location>
</feature>
<feature type="propeptide" id="PRO_0000021842">
    <location>
        <begin position="20"/>
        <end position="34"/>
    </location>
</feature>
<feature type="peptide" id="PRO_0000021843" description="Neuropeptide-like 2">
    <location>
        <begin position="35"/>
        <end position="44"/>
    </location>
</feature>
<feature type="propeptide" id="PRO_0000021844">
    <location>
        <begin position="45"/>
        <end position="86"/>
    </location>
</feature>
<sequence length="86" mass="9412">MAKLAICILVFALFALALSARVPREESNPAQEFLTKAQGDFNEFIEKLKALDAKKVEGLFKDGLNTVQEGLQKLNETFLQAPAAST</sequence>
<keyword id="KW-0903">Direct protein sequencing</keyword>
<keyword id="KW-0527">Neuropeptide</keyword>
<keyword id="KW-1185">Reference proteome</keyword>
<keyword id="KW-0964">Secreted</keyword>
<keyword id="KW-0732">Signal</keyword>
<reference key="1">
    <citation type="journal article" date="2000" name="Science">
        <title>The genome sequence of Drosophila melanogaster.</title>
        <authorList>
            <person name="Adams M.D."/>
            <person name="Celniker S.E."/>
            <person name="Holt R.A."/>
            <person name="Evans C.A."/>
            <person name="Gocayne J.D."/>
            <person name="Amanatides P.G."/>
            <person name="Scherer S.E."/>
            <person name="Li P.W."/>
            <person name="Hoskins R.A."/>
            <person name="Galle R.F."/>
            <person name="George R.A."/>
            <person name="Lewis S.E."/>
            <person name="Richards S."/>
            <person name="Ashburner M."/>
            <person name="Henderson S.N."/>
            <person name="Sutton G.G."/>
            <person name="Wortman J.R."/>
            <person name="Yandell M.D."/>
            <person name="Zhang Q."/>
            <person name="Chen L.X."/>
            <person name="Brandon R.C."/>
            <person name="Rogers Y.-H.C."/>
            <person name="Blazej R.G."/>
            <person name="Champe M."/>
            <person name="Pfeiffer B.D."/>
            <person name="Wan K.H."/>
            <person name="Doyle C."/>
            <person name="Baxter E.G."/>
            <person name="Helt G."/>
            <person name="Nelson C.R."/>
            <person name="Miklos G.L.G."/>
            <person name="Abril J.F."/>
            <person name="Agbayani A."/>
            <person name="An H.-J."/>
            <person name="Andrews-Pfannkoch C."/>
            <person name="Baldwin D."/>
            <person name="Ballew R.M."/>
            <person name="Basu A."/>
            <person name="Baxendale J."/>
            <person name="Bayraktaroglu L."/>
            <person name="Beasley E.M."/>
            <person name="Beeson K.Y."/>
            <person name="Benos P.V."/>
            <person name="Berman B.P."/>
            <person name="Bhandari D."/>
            <person name="Bolshakov S."/>
            <person name="Borkova D."/>
            <person name="Botchan M.R."/>
            <person name="Bouck J."/>
            <person name="Brokstein P."/>
            <person name="Brottier P."/>
            <person name="Burtis K.C."/>
            <person name="Busam D.A."/>
            <person name="Butler H."/>
            <person name="Cadieu E."/>
            <person name="Center A."/>
            <person name="Chandra I."/>
            <person name="Cherry J.M."/>
            <person name="Cawley S."/>
            <person name="Dahlke C."/>
            <person name="Davenport L.B."/>
            <person name="Davies P."/>
            <person name="de Pablos B."/>
            <person name="Delcher A."/>
            <person name="Deng Z."/>
            <person name="Mays A.D."/>
            <person name="Dew I."/>
            <person name="Dietz S.M."/>
            <person name="Dodson K."/>
            <person name="Doup L.E."/>
            <person name="Downes M."/>
            <person name="Dugan-Rocha S."/>
            <person name="Dunkov B.C."/>
            <person name="Dunn P."/>
            <person name="Durbin K.J."/>
            <person name="Evangelista C.C."/>
            <person name="Ferraz C."/>
            <person name="Ferriera S."/>
            <person name="Fleischmann W."/>
            <person name="Fosler C."/>
            <person name="Gabrielian A.E."/>
            <person name="Garg N.S."/>
            <person name="Gelbart W.M."/>
            <person name="Glasser K."/>
            <person name="Glodek A."/>
            <person name="Gong F."/>
            <person name="Gorrell J.H."/>
            <person name="Gu Z."/>
            <person name="Guan P."/>
            <person name="Harris M."/>
            <person name="Harris N.L."/>
            <person name="Harvey D.A."/>
            <person name="Heiman T.J."/>
            <person name="Hernandez J.R."/>
            <person name="Houck J."/>
            <person name="Hostin D."/>
            <person name="Houston K.A."/>
            <person name="Howland T.J."/>
            <person name="Wei M.-H."/>
            <person name="Ibegwam C."/>
            <person name="Jalali M."/>
            <person name="Kalush F."/>
            <person name="Karpen G.H."/>
            <person name="Ke Z."/>
            <person name="Kennison J.A."/>
            <person name="Ketchum K.A."/>
            <person name="Kimmel B.E."/>
            <person name="Kodira C.D."/>
            <person name="Kraft C.L."/>
            <person name="Kravitz S."/>
            <person name="Kulp D."/>
            <person name="Lai Z."/>
            <person name="Lasko P."/>
            <person name="Lei Y."/>
            <person name="Levitsky A.A."/>
            <person name="Li J.H."/>
            <person name="Li Z."/>
            <person name="Liang Y."/>
            <person name="Lin X."/>
            <person name="Liu X."/>
            <person name="Mattei B."/>
            <person name="McIntosh T.C."/>
            <person name="McLeod M.P."/>
            <person name="McPherson D."/>
            <person name="Merkulov G."/>
            <person name="Milshina N.V."/>
            <person name="Mobarry C."/>
            <person name="Morris J."/>
            <person name="Moshrefi A."/>
            <person name="Mount S.M."/>
            <person name="Moy M."/>
            <person name="Murphy B."/>
            <person name="Murphy L."/>
            <person name="Muzny D.M."/>
            <person name="Nelson D.L."/>
            <person name="Nelson D.R."/>
            <person name="Nelson K.A."/>
            <person name="Nixon K."/>
            <person name="Nusskern D.R."/>
            <person name="Pacleb J.M."/>
            <person name="Palazzolo M."/>
            <person name="Pittman G.S."/>
            <person name="Pan S."/>
            <person name="Pollard J."/>
            <person name="Puri V."/>
            <person name="Reese M.G."/>
            <person name="Reinert K."/>
            <person name="Remington K."/>
            <person name="Saunders R.D.C."/>
            <person name="Scheeler F."/>
            <person name="Shen H."/>
            <person name="Shue B.C."/>
            <person name="Siden-Kiamos I."/>
            <person name="Simpson M."/>
            <person name="Skupski M.P."/>
            <person name="Smith T.J."/>
            <person name="Spier E."/>
            <person name="Spradling A.C."/>
            <person name="Stapleton M."/>
            <person name="Strong R."/>
            <person name="Sun E."/>
            <person name="Svirskas R."/>
            <person name="Tector C."/>
            <person name="Turner R."/>
            <person name="Venter E."/>
            <person name="Wang A.H."/>
            <person name="Wang X."/>
            <person name="Wang Z.-Y."/>
            <person name="Wassarman D.A."/>
            <person name="Weinstock G.M."/>
            <person name="Weissenbach J."/>
            <person name="Williams S.M."/>
            <person name="Woodage T."/>
            <person name="Worley K.C."/>
            <person name="Wu D."/>
            <person name="Yang S."/>
            <person name="Yao Q.A."/>
            <person name="Ye J."/>
            <person name="Yeh R.-F."/>
            <person name="Zaveri J.S."/>
            <person name="Zhan M."/>
            <person name="Zhang G."/>
            <person name="Zhao Q."/>
            <person name="Zheng L."/>
            <person name="Zheng X.H."/>
            <person name="Zhong F.N."/>
            <person name="Zhong W."/>
            <person name="Zhou X."/>
            <person name="Zhu S.C."/>
            <person name="Zhu X."/>
            <person name="Smith H.O."/>
            <person name="Gibbs R.A."/>
            <person name="Myers E.W."/>
            <person name="Rubin G.M."/>
            <person name="Venter J.C."/>
        </authorList>
    </citation>
    <scope>NUCLEOTIDE SEQUENCE [LARGE SCALE GENOMIC DNA]</scope>
    <source>
        <strain>Berkeley</strain>
    </source>
</reference>
<reference key="2">
    <citation type="journal article" date="2002" name="Genome Biol.">
        <title>Annotation of the Drosophila melanogaster euchromatic genome: a systematic review.</title>
        <authorList>
            <person name="Misra S."/>
            <person name="Crosby M.A."/>
            <person name="Mungall C.J."/>
            <person name="Matthews B.B."/>
            <person name="Campbell K.S."/>
            <person name="Hradecky P."/>
            <person name="Huang Y."/>
            <person name="Kaminker J.S."/>
            <person name="Millburn G.H."/>
            <person name="Prochnik S.E."/>
            <person name="Smith C.D."/>
            <person name="Tupy J.L."/>
            <person name="Whitfield E.J."/>
            <person name="Bayraktaroglu L."/>
            <person name="Berman B.P."/>
            <person name="Bettencourt B.R."/>
            <person name="Celniker S.E."/>
            <person name="de Grey A.D.N.J."/>
            <person name="Drysdale R.A."/>
            <person name="Harris N.L."/>
            <person name="Richter J."/>
            <person name="Russo S."/>
            <person name="Schroeder A.J."/>
            <person name="Shu S.Q."/>
            <person name="Stapleton M."/>
            <person name="Yamada C."/>
            <person name="Ashburner M."/>
            <person name="Gelbart W.M."/>
            <person name="Rubin G.M."/>
            <person name="Lewis S.E."/>
        </authorList>
    </citation>
    <scope>GENOME REANNOTATION</scope>
    <source>
        <strain>Berkeley</strain>
    </source>
</reference>
<reference key="3">
    <citation type="journal article" date="2002" name="Genome Biol.">
        <title>A Drosophila full-length cDNA resource.</title>
        <authorList>
            <person name="Stapleton M."/>
            <person name="Carlson J.W."/>
            <person name="Brokstein P."/>
            <person name="Yu C."/>
            <person name="Champe M."/>
            <person name="George R.A."/>
            <person name="Guarin H."/>
            <person name="Kronmiller B."/>
            <person name="Pacleb J.M."/>
            <person name="Park S."/>
            <person name="Wan K.H."/>
            <person name="Rubin G.M."/>
            <person name="Celniker S.E."/>
        </authorList>
    </citation>
    <scope>NUCLEOTIDE SEQUENCE [LARGE SCALE MRNA]</scope>
    <source>
        <strain>Berkeley</strain>
        <tissue>Head</tissue>
    </source>
</reference>
<reference key="4">
    <citation type="journal article" date="2002" name="J. Biol. Chem.">
        <title>Peptidomics of the larval Drosophila melanogaster central nervous system.</title>
        <authorList>
            <person name="Baggerman G."/>
            <person name="Cerstiaens A."/>
            <person name="De Loof A."/>
            <person name="Schoofs L."/>
        </authorList>
    </citation>
    <scope>PROTEIN SEQUENCE OF 35-44</scope>
    <source>
        <tissue>Larva</tissue>
    </source>
</reference>
<reference key="5">
    <citation type="journal article" date="2004" name="J. Neurochem.">
        <title>Expression of a novel neuropeptide, NVGTLARDFQLPIPNamide, in the larval and adult brain of Drosophila melanogaster.</title>
        <authorList>
            <person name="Verleyen P."/>
            <person name="Baggerman G."/>
            <person name="Wiehart U."/>
            <person name="Schoeters E."/>
            <person name="Van Lommel A."/>
            <person name="De Loof A."/>
            <person name="Schoofs L."/>
        </authorList>
    </citation>
    <scope>PROTEIN SEQUENCE OF 35-44</scope>
    <source>
        <tissue>CNS</tissue>
    </source>
</reference>
<reference key="6">
    <citation type="journal article" date="2006" name="J. Insect Physiol.">
        <title>Identification of new immune induced molecules in the haemolymph of Drosophila melanogaster by 2D-nanoLC MS/MS.</title>
        <authorList>
            <person name="Verleyen P."/>
            <person name="Baggerman G."/>
            <person name="D'Hertog W."/>
            <person name="Vierstraete E."/>
            <person name="Husson S.J."/>
            <person name="Schoofs L."/>
        </authorList>
    </citation>
    <scope>SUBCELLULAR LOCATION</scope>
    <scope>TISSUE SPECIFICITY</scope>
    <scope>INDUCTION BY BACTERIA</scope>
    <scope>IDENTIFICATION BY MASS SPECTROMETRY</scope>
    <source>
        <tissue evidence="3">Hemolymph</tissue>
    </source>
</reference>
<gene>
    <name type="primary">Nplp2</name>
    <name type="ORF">CG11051</name>
</gene>
<protein>
    <recommendedName>
        <fullName>Neuropeptide-like 2</fullName>
    </recommendedName>
    <alternativeName>
        <fullName>NEF peptide</fullName>
    </alternativeName>
</protein>